<proteinExistence type="inferred from homology"/>
<feature type="initiator methionine" description="Removed" evidence="1">
    <location>
        <position position="1"/>
    </location>
</feature>
<feature type="chain" id="PRO_0000427286" description="AP-4-A phosphorylase">
    <location>
        <begin position="2"/>
        <end position="195"/>
    </location>
</feature>
<feature type="domain" description="HIT" evidence="2">
    <location>
        <begin position="57"/>
        <end position="166"/>
    </location>
</feature>
<feature type="region of interest" description="Disordered" evidence="3">
    <location>
        <begin position="1"/>
        <end position="20"/>
    </location>
</feature>
<feature type="short sequence motif" description="Histidine triad motif" evidence="2">
    <location>
        <begin position="151"/>
        <end position="155"/>
    </location>
</feature>
<feature type="compositionally biased region" description="Basic and acidic residues" evidence="3">
    <location>
        <begin position="1"/>
        <end position="17"/>
    </location>
</feature>
<feature type="active site" description="Tele-AMP-histidine intermediate" evidence="1">
    <location>
        <position position="153"/>
    </location>
</feature>
<reference key="1">
    <citation type="journal article" date="2002" name="J. Bacteriol.">
        <title>Whole-genome comparison of Mycobacterium tuberculosis clinical and laboratory strains.</title>
        <authorList>
            <person name="Fleischmann R.D."/>
            <person name="Alland D."/>
            <person name="Eisen J.A."/>
            <person name="Carpenter L."/>
            <person name="White O."/>
            <person name="Peterson J.D."/>
            <person name="DeBoy R.T."/>
            <person name="Dodson R.J."/>
            <person name="Gwinn M.L."/>
            <person name="Haft D.H."/>
            <person name="Hickey E.K."/>
            <person name="Kolonay J.F."/>
            <person name="Nelson W.C."/>
            <person name="Umayam L.A."/>
            <person name="Ermolaeva M.D."/>
            <person name="Salzberg S.L."/>
            <person name="Delcher A."/>
            <person name="Utterback T.R."/>
            <person name="Weidman J.F."/>
            <person name="Khouri H.M."/>
            <person name="Gill J."/>
            <person name="Mikula A."/>
            <person name="Bishai W."/>
            <person name="Jacobs W.R. Jr."/>
            <person name="Venter J.C."/>
            <person name="Fraser C.M."/>
        </authorList>
    </citation>
    <scope>NUCLEOTIDE SEQUENCE [LARGE SCALE GENOMIC DNA]</scope>
    <source>
        <strain>CDC 1551 / Oshkosh</strain>
    </source>
</reference>
<accession>P9WMK8</accession>
<accession>L0TA61</accession>
<accession>O06201</accession>
<accession>Q7D6W5</accession>
<name>AP4A_MYCTO</name>
<organism>
    <name type="scientific">Mycobacterium tuberculosis (strain CDC 1551 / Oshkosh)</name>
    <dbReference type="NCBI Taxonomy" id="83331"/>
    <lineage>
        <taxon>Bacteria</taxon>
        <taxon>Bacillati</taxon>
        <taxon>Actinomycetota</taxon>
        <taxon>Actinomycetes</taxon>
        <taxon>Mycobacteriales</taxon>
        <taxon>Mycobacteriaceae</taxon>
        <taxon>Mycobacterium</taxon>
        <taxon>Mycobacterium tuberculosis complex</taxon>
    </lineage>
</organism>
<protein>
    <recommendedName>
        <fullName>AP-4-A phosphorylase</fullName>
        <ecNumber>2.7.7.53</ecNumber>
    </recommendedName>
    <alternativeName>
        <fullName>ATP adenylyltransferase</fullName>
    </alternativeName>
    <alternativeName>
        <fullName>Diadenosine 5',5'''-P1,P4-tetraphosphate phosphorylase</fullName>
        <shortName>AP,A phosphorylase</shortName>
    </alternativeName>
</protein>
<gene>
    <name type="ordered locus">MT2688</name>
</gene>
<keyword id="KW-0067">ATP-binding</keyword>
<keyword id="KW-0547">Nucleotide-binding</keyword>
<keyword id="KW-0548">Nucleotidyltransferase</keyword>
<keyword id="KW-0597">Phosphoprotein</keyword>
<keyword id="KW-1185">Reference proteome</keyword>
<keyword id="KW-0808">Transferase</keyword>
<comment type="function">
    <text evidence="1">Catabolizes diadenosine 5',5'''-P1,P4-tetraphosphate (Ap4A) into ADP and ATP.</text>
</comment>
<comment type="catalytic activity">
    <reaction>
        <text>ADP + ATP + H(+) = P(1),P(4)-bis(5'-adenosyl) tetraphosphate + phosphate</text>
        <dbReference type="Rhea" id="RHEA:16577"/>
        <dbReference type="ChEBI" id="CHEBI:15378"/>
        <dbReference type="ChEBI" id="CHEBI:30616"/>
        <dbReference type="ChEBI" id="CHEBI:43474"/>
        <dbReference type="ChEBI" id="CHEBI:58141"/>
        <dbReference type="ChEBI" id="CHEBI:456216"/>
        <dbReference type="EC" id="2.7.7.53"/>
    </reaction>
</comment>
<comment type="cofactor">
    <cofactor evidence="1">
        <name>a divalent metal cation</name>
        <dbReference type="ChEBI" id="CHEBI:60240"/>
    </cofactor>
    <text evidence="1">Binds 1 divalent metal ion per subunit.</text>
</comment>
<comment type="subunit">
    <text evidence="1">Homotetramer.</text>
</comment>
<evidence type="ECO:0000250" key="1"/>
<evidence type="ECO:0000255" key="2">
    <source>
        <dbReference type="PROSITE-ProRule" id="PRU00464"/>
    </source>
</evidence>
<evidence type="ECO:0000256" key="3">
    <source>
        <dbReference type="SAM" id="MobiDB-lite"/>
    </source>
</evidence>
<dbReference type="EC" id="2.7.7.53"/>
<dbReference type="EMBL" id="AE000516">
    <property type="protein sequence ID" value="AAK47004.1"/>
    <property type="molecule type" value="Genomic_DNA"/>
</dbReference>
<dbReference type="PIR" id="D70571">
    <property type="entry name" value="D70571"/>
</dbReference>
<dbReference type="RefSeq" id="WP_003413484.1">
    <property type="nucleotide sequence ID" value="NZ_KK341227.1"/>
</dbReference>
<dbReference type="SMR" id="P9WMK8"/>
<dbReference type="KEGG" id="mtc:MT2688"/>
<dbReference type="PATRIC" id="fig|83331.31.peg.2898"/>
<dbReference type="HOGENOM" id="CLU_056776_1_0_11"/>
<dbReference type="Proteomes" id="UP000001020">
    <property type="component" value="Chromosome"/>
</dbReference>
<dbReference type="GO" id="GO:0005524">
    <property type="term" value="F:ATP binding"/>
    <property type="evidence" value="ECO:0007669"/>
    <property type="project" value="UniProtKB-KW"/>
</dbReference>
<dbReference type="GO" id="GO:0003877">
    <property type="term" value="F:ATP:ADP adenylyltransferase activity"/>
    <property type="evidence" value="ECO:0007669"/>
    <property type="project" value="UniProtKB-EC"/>
</dbReference>
<dbReference type="CDD" id="cd01275">
    <property type="entry name" value="FHIT"/>
    <property type="match status" value="1"/>
</dbReference>
<dbReference type="FunFam" id="3.30.428.10:FF:000022">
    <property type="entry name" value="AP-4-A phosphorylase"/>
    <property type="match status" value="1"/>
</dbReference>
<dbReference type="Gene3D" id="3.30.428.10">
    <property type="entry name" value="HIT-like"/>
    <property type="match status" value="1"/>
</dbReference>
<dbReference type="InterPro" id="IPR052908">
    <property type="entry name" value="AP-4-A_phosphorylase"/>
</dbReference>
<dbReference type="InterPro" id="IPR039383">
    <property type="entry name" value="FHIT"/>
</dbReference>
<dbReference type="InterPro" id="IPR011146">
    <property type="entry name" value="HIT-like"/>
</dbReference>
<dbReference type="InterPro" id="IPR036265">
    <property type="entry name" value="HIT-like_sf"/>
</dbReference>
<dbReference type="PANTHER" id="PTHR42997:SF1">
    <property type="entry name" value="AP-4-A PHOSPHORYLASE"/>
    <property type="match status" value="1"/>
</dbReference>
<dbReference type="PANTHER" id="PTHR42997">
    <property type="entry name" value="HIT FAMILY HYDROLASE"/>
    <property type="match status" value="1"/>
</dbReference>
<dbReference type="Pfam" id="PF01230">
    <property type="entry name" value="HIT"/>
    <property type="match status" value="1"/>
</dbReference>
<dbReference type="SUPFAM" id="SSF54197">
    <property type="entry name" value="HIT-like"/>
    <property type="match status" value="1"/>
</dbReference>
<dbReference type="PROSITE" id="PS51084">
    <property type="entry name" value="HIT_2"/>
    <property type="match status" value="1"/>
</dbReference>
<sequence length="195" mass="21869">MSDEDRTDRATEDHTIFDRGVGQRDQLQRLWTPYRMNYLAEAPVKRDPNSSASPAQPFTEIPQLSDEEGLVVARGKLVYAVLNLYPYNPGHLMVVPYRRVSELEDLTDLESAELMAFTQKAIRVIKNVSRPHGFNVGLNLGTSAGGSLAEHLHVHVVPRWGGDANFITIIGGSKVIPQLLRDTRRLLATEWARQP</sequence>